<name>RPOA_SALTY</name>
<proteinExistence type="inferred from homology"/>
<protein>
    <recommendedName>
        <fullName>DNA-directed RNA polymerase subunit alpha</fullName>
        <shortName>RNAP subunit alpha</shortName>
        <ecNumber>2.7.7.6</ecNumber>
    </recommendedName>
    <alternativeName>
        <fullName>RNA polymerase subunit alpha</fullName>
    </alternativeName>
    <alternativeName>
        <fullName>Transcriptase subunit alpha</fullName>
    </alternativeName>
</protein>
<reference key="1">
    <citation type="journal article" date="1991" name="J. Bacteriol.">
        <title>Mutations in rpoA affect expression of anaerobically regulated genes in Salmonella typhimurium.</title>
        <authorList>
            <person name="Lombardo M.J."/>
            <person name="Bagga D.A."/>
            <person name="Miller C.G."/>
        </authorList>
    </citation>
    <scope>NUCLEOTIDE SEQUENCE [GENOMIC DNA]</scope>
</reference>
<reference key="2">
    <citation type="journal article" date="2001" name="Nature">
        <title>Complete genome sequence of Salmonella enterica serovar Typhimurium LT2.</title>
        <authorList>
            <person name="McClelland M."/>
            <person name="Sanderson K.E."/>
            <person name="Spieth J."/>
            <person name="Clifton S.W."/>
            <person name="Latreille P."/>
            <person name="Courtney L."/>
            <person name="Porwollik S."/>
            <person name="Ali J."/>
            <person name="Dante M."/>
            <person name="Du F."/>
            <person name="Hou S."/>
            <person name="Layman D."/>
            <person name="Leonard S."/>
            <person name="Nguyen C."/>
            <person name="Scott K."/>
            <person name="Holmes A."/>
            <person name="Grewal N."/>
            <person name="Mulvaney E."/>
            <person name="Ryan E."/>
            <person name="Sun H."/>
            <person name="Florea L."/>
            <person name="Miller W."/>
            <person name="Stoneking T."/>
            <person name="Nhan M."/>
            <person name="Waterston R."/>
            <person name="Wilson R.K."/>
        </authorList>
    </citation>
    <scope>NUCLEOTIDE SEQUENCE [LARGE SCALE GENOMIC DNA]</scope>
    <source>
        <strain>LT2 / SGSC1412 / ATCC 700720</strain>
    </source>
</reference>
<dbReference type="EC" id="2.7.7.6"/>
<dbReference type="EMBL" id="M77750">
    <property type="protein sequence ID" value="AAA27214.1"/>
    <property type="molecule type" value="Genomic_DNA"/>
</dbReference>
<dbReference type="EMBL" id="AE006468">
    <property type="protein sequence ID" value="AAL22278.1"/>
    <property type="molecule type" value="Genomic_DNA"/>
</dbReference>
<dbReference type="PIR" id="A41658">
    <property type="entry name" value="A41658"/>
</dbReference>
<dbReference type="RefSeq" id="NP_462319.1">
    <property type="nucleotide sequence ID" value="NC_003197.2"/>
</dbReference>
<dbReference type="RefSeq" id="WP_001162094.1">
    <property type="nucleotide sequence ID" value="NC_003197.2"/>
</dbReference>
<dbReference type="SMR" id="P0A7Z7"/>
<dbReference type="STRING" id="99287.STM3415"/>
<dbReference type="PaxDb" id="99287-STM3415"/>
<dbReference type="GeneID" id="1254938"/>
<dbReference type="GeneID" id="93778692"/>
<dbReference type="KEGG" id="stm:STM3415"/>
<dbReference type="PATRIC" id="fig|99287.12.peg.3612"/>
<dbReference type="HOGENOM" id="CLU_053084_0_0_6"/>
<dbReference type="OMA" id="PIKNVKY"/>
<dbReference type="PhylomeDB" id="P0A7Z7"/>
<dbReference type="BioCyc" id="SENT99287:STM3415-MONOMER"/>
<dbReference type="Proteomes" id="UP000001014">
    <property type="component" value="Chromosome"/>
</dbReference>
<dbReference type="GO" id="GO:0005737">
    <property type="term" value="C:cytoplasm"/>
    <property type="evidence" value="ECO:0000318"/>
    <property type="project" value="GO_Central"/>
</dbReference>
<dbReference type="GO" id="GO:0000428">
    <property type="term" value="C:DNA-directed RNA polymerase complex"/>
    <property type="evidence" value="ECO:0007669"/>
    <property type="project" value="UniProtKB-KW"/>
</dbReference>
<dbReference type="GO" id="GO:0003677">
    <property type="term" value="F:DNA binding"/>
    <property type="evidence" value="ECO:0007669"/>
    <property type="project" value="UniProtKB-UniRule"/>
</dbReference>
<dbReference type="GO" id="GO:0003899">
    <property type="term" value="F:DNA-directed RNA polymerase activity"/>
    <property type="evidence" value="ECO:0007669"/>
    <property type="project" value="UniProtKB-UniRule"/>
</dbReference>
<dbReference type="GO" id="GO:0046983">
    <property type="term" value="F:protein dimerization activity"/>
    <property type="evidence" value="ECO:0007669"/>
    <property type="project" value="InterPro"/>
</dbReference>
<dbReference type="GO" id="GO:0006351">
    <property type="term" value="P:DNA-templated transcription"/>
    <property type="evidence" value="ECO:0007669"/>
    <property type="project" value="UniProtKB-UniRule"/>
</dbReference>
<dbReference type="CDD" id="cd06928">
    <property type="entry name" value="RNAP_alpha_NTD"/>
    <property type="match status" value="1"/>
</dbReference>
<dbReference type="FunFam" id="1.10.150.20:FF:000001">
    <property type="entry name" value="DNA-directed RNA polymerase subunit alpha"/>
    <property type="match status" value="1"/>
</dbReference>
<dbReference type="FunFam" id="2.170.120.12:FF:000001">
    <property type="entry name" value="DNA-directed RNA polymerase subunit alpha"/>
    <property type="match status" value="1"/>
</dbReference>
<dbReference type="Gene3D" id="1.10.150.20">
    <property type="entry name" value="5' to 3' exonuclease, C-terminal subdomain"/>
    <property type="match status" value="1"/>
</dbReference>
<dbReference type="Gene3D" id="2.170.120.12">
    <property type="entry name" value="DNA-directed RNA polymerase, insert domain"/>
    <property type="match status" value="1"/>
</dbReference>
<dbReference type="Gene3D" id="3.30.1360.10">
    <property type="entry name" value="RNA polymerase, RBP11-like subunit"/>
    <property type="match status" value="1"/>
</dbReference>
<dbReference type="HAMAP" id="MF_00059">
    <property type="entry name" value="RNApol_bact_RpoA"/>
    <property type="match status" value="1"/>
</dbReference>
<dbReference type="InterPro" id="IPR011262">
    <property type="entry name" value="DNA-dir_RNA_pol_insert"/>
</dbReference>
<dbReference type="InterPro" id="IPR011263">
    <property type="entry name" value="DNA-dir_RNA_pol_RpoA/D/Rpb3"/>
</dbReference>
<dbReference type="InterPro" id="IPR011773">
    <property type="entry name" value="DNA-dir_RpoA"/>
</dbReference>
<dbReference type="InterPro" id="IPR036603">
    <property type="entry name" value="RBP11-like"/>
</dbReference>
<dbReference type="InterPro" id="IPR011260">
    <property type="entry name" value="RNAP_asu_C"/>
</dbReference>
<dbReference type="InterPro" id="IPR036643">
    <property type="entry name" value="RNApol_insert_sf"/>
</dbReference>
<dbReference type="NCBIfam" id="NF003513">
    <property type="entry name" value="PRK05182.1-2"/>
    <property type="match status" value="1"/>
</dbReference>
<dbReference type="NCBIfam" id="NF003519">
    <property type="entry name" value="PRK05182.2-5"/>
    <property type="match status" value="1"/>
</dbReference>
<dbReference type="NCBIfam" id="TIGR02027">
    <property type="entry name" value="rpoA"/>
    <property type="match status" value="1"/>
</dbReference>
<dbReference type="Pfam" id="PF01000">
    <property type="entry name" value="RNA_pol_A_bac"/>
    <property type="match status" value="1"/>
</dbReference>
<dbReference type="Pfam" id="PF03118">
    <property type="entry name" value="RNA_pol_A_CTD"/>
    <property type="match status" value="1"/>
</dbReference>
<dbReference type="Pfam" id="PF01193">
    <property type="entry name" value="RNA_pol_L"/>
    <property type="match status" value="1"/>
</dbReference>
<dbReference type="SMART" id="SM00662">
    <property type="entry name" value="RPOLD"/>
    <property type="match status" value="1"/>
</dbReference>
<dbReference type="SUPFAM" id="SSF47789">
    <property type="entry name" value="C-terminal domain of RNA polymerase alpha subunit"/>
    <property type="match status" value="1"/>
</dbReference>
<dbReference type="SUPFAM" id="SSF56553">
    <property type="entry name" value="Insert subdomain of RNA polymerase alpha subunit"/>
    <property type="match status" value="1"/>
</dbReference>
<dbReference type="SUPFAM" id="SSF55257">
    <property type="entry name" value="RBP11-like subunits of RNA polymerase"/>
    <property type="match status" value="1"/>
</dbReference>
<evidence type="ECO:0000250" key="1"/>
<evidence type="ECO:0000305" key="2"/>
<sequence>MQGSVTEFLKPRLVDIEQVSSTHAKVTLEPLERGFGHTLGNALRRILLSSMPGCAVTEVEIDGVLHEYSTKEGVQEDILEILLNLKGLAVRVQGKDEVILTLNKSGIGPVTAADITHDGDVEIVKPQHVICHLTDENASISMRIKVQRGRGYVPASTRIHSEEDERPIGRLLVDACYSPVERIAYNVEAARVEQRTDLDKLVIEMETNGTIDPEEAIRRAATILAEQLEAFVDLRDVRQPEVKEEKPEFDPILLRPVDDLELTVRSANCLKAEAIHYIGDLVQRTEVELLKTPNLGKKSLTEIKDVLASRGLSLGMRLENWPPASIADE</sequence>
<gene>
    <name type="primary">rpoA</name>
    <name type="ordered locus">STM3415</name>
</gene>
<feature type="chain" id="PRO_0000175373" description="DNA-directed RNA polymerase subunit alpha">
    <location>
        <begin position="1"/>
        <end position="329"/>
    </location>
</feature>
<feature type="region of interest" description="Alpha N-terminal domain (alpha-NTD)" evidence="1">
    <location>
        <begin position="1"/>
        <end position="235"/>
    </location>
</feature>
<feature type="region of interest" description="Alpha C-terminal domain (alpha-CTD)" evidence="1">
    <location>
        <begin position="249"/>
        <end position="329"/>
    </location>
</feature>
<keyword id="KW-0240">DNA-directed RNA polymerase</keyword>
<keyword id="KW-0548">Nucleotidyltransferase</keyword>
<keyword id="KW-1185">Reference proteome</keyword>
<keyword id="KW-0804">Transcription</keyword>
<keyword id="KW-0808">Transferase</keyword>
<comment type="function">
    <text evidence="1">DNA-dependent RNA polymerase catalyzes the transcription of DNA into RNA using the four ribonucleoside triphosphates as substrates.</text>
</comment>
<comment type="catalytic activity">
    <reaction>
        <text>RNA(n) + a ribonucleoside 5'-triphosphate = RNA(n+1) + diphosphate</text>
        <dbReference type="Rhea" id="RHEA:21248"/>
        <dbReference type="Rhea" id="RHEA-COMP:14527"/>
        <dbReference type="Rhea" id="RHEA-COMP:17342"/>
        <dbReference type="ChEBI" id="CHEBI:33019"/>
        <dbReference type="ChEBI" id="CHEBI:61557"/>
        <dbReference type="ChEBI" id="CHEBI:140395"/>
        <dbReference type="EC" id="2.7.7.6"/>
    </reaction>
</comment>
<comment type="subunit">
    <text evidence="1">Homodimer. The RNAP catalytic core consists of 2 alpha, 1 beta, 1 beta' and 1 omega subunit. When a sigma factor is associated with the core the holoenzyme is formed, which can initiate transcription (By similarity).</text>
</comment>
<comment type="domain">
    <text evidence="1">The N-terminal domain is essential for RNAP assembly and basal transcription, whereas the C-terminal domain is involved in interaction with transcriptional regulators and with upstream promoter elements.</text>
</comment>
<comment type="similarity">
    <text evidence="2">Belongs to the RNA polymerase alpha chain family.</text>
</comment>
<organism>
    <name type="scientific">Salmonella typhimurium (strain LT2 / SGSC1412 / ATCC 700720)</name>
    <dbReference type="NCBI Taxonomy" id="99287"/>
    <lineage>
        <taxon>Bacteria</taxon>
        <taxon>Pseudomonadati</taxon>
        <taxon>Pseudomonadota</taxon>
        <taxon>Gammaproteobacteria</taxon>
        <taxon>Enterobacterales</taxon>
        <taxon>Enterobacteriaceae</taxon>
        <taxon>Salmonella</taxon>
    </lineage>
</organism>
<accession>P0A7Z7</accession>
<accession>P00574</accession>